<gene>
    <name type="primary">RPA2A</name>
    <name type="synonym">RPA32A</name>
    <name type="ordered locus">Os02g0829100</name>
    <name type="ordered locus">LOC_Os02g58220</name>
    <name type="ORF">OJ1124_D06.4</name>
    <name type="ORF">OsJ_08977</name>
</gene>
<feature type="chain" id="PRO_0000422623" description="Replication protein A 32 kDa subunit A">
    <location>
        <begin position="1"/>
        <end position="279"/>
    </location>
</feature>
<feature type="DNA-binding region" description="OB">
    <location>
        <begin position="71"/>
        <end position="145"/>
    </location>
</feature>
<feature type="region of interest" description="Disordered" evidence="2">
    <location>
        <begin position="1"/>
        <end position="39"/>
    </location>
</feature>
<feature type="region of interest" description="Disordered" evidence="2">
    <location>
        <begin position="181"/>
        <end position="210"/>
    </location>
</feature>
<feature type="compositionally biased region" description="Polar residues" evidence="2">
    <location>
        <begin position="190"/>
        <end position="199"/>
    </location>
</feature>
<feature type="sequence conflict" description="In Ref. 1; BAB40535." evidence="7" ref="1">
    <original>T</original>
    <variation>M</variation>
    <location>
        <position position="90"/>
    </location>
</feature>
<feature type="sequence conflict" description="In Ref. 1; BAB40535." evidence="7" ref="1">
    <original>F</original>
    <variation>L</variation>
    <location>
        <position position="244"/>
    </location>
</feature>
<evidence type="ECO:0000250" key="1"/>
<evidence type="ECO:0000256" key="2">
    <source>
        <dbReference type="SAM" id="MobiDB-lite"/>
    </source>
</evidence>
<evidence type="ECO:0000269" key="3">
    <source>
    </source>
</evidence>
<evidence type="ECO:0000269" key="4">
    <source>
    </source>
</evidence>
<evidence type="ECO:0000269" key="5">
    <source>
    </source>
</evidence>
<evidence type="ECO:0000269" key="6">
    <source>
    </source>
</evidence>
<evidence type="ECO:0000305" key="7"/>
<proteinExistence type="evidence at protein level"/>
<keyword id="KW-0227">DNA damage</keyword>
<keyword id="KW-0233">DNA recombination</keyword>
<keyword id="KW-0234">DNA repair</keyword>
<keyword id="KW-0235">DNA replication</keyword>
<keyword id="KW-0238">DNA-binding</keyword>
<keyword id="KW-0539">Nucleus</keyword>
<keyword id="KW-1185">Reference proteome</keyword>
<organism>
    <name type="scientific">Oryza sativa subsp. japonica</name>
    <name type="common">Rice</name>
    <dbReference type="NCBI Taxonomy" id="39947"/>
    <lineage>
        <taxon>Eukaryota</taxon>
        <taxon>Viridiplantae</taxon>
        <taxon>Streptophyta</taxon>
        <taxon>Embryophyta</taxon>
        <taxon>Tracheophyta</taxon>
        <taxon>Spermatophyta</taxon>
        <taxon>Magnoliopsida</taxon>
        <taxon>Liliopsida</taxon>
        <taxon>Poales</taxon>
        <taxon>Poaceae</taxon>
        <taxon>BOP clade</taxon>
        <taxon>Oryzoideae</taxon>
        <taxon>Oryzeae</taxon>
        <taxon>Oryzinae</taxon>
        <taxon>Oryza</taxon>
        <taxon>Oryza sativa</taxon>
    </lineage>
</organism>
<sequence length="279" mass="30082">MMSFSQPDAFSPSQFTSSQNAAADSTTPSKSRGASSTMPLTVKQISEAQQSGITGEKGAPFVVDGVETANVRLVGLVSGKTERNTDVSFTIDDGTGRLDFIRWVNDGADSAETAAVQNGMYVSVIGSLKGLQERKRATAFAIRPVTDYNEVTLHFIQCVRMHLENTKSQIGSPAKTYSAMGSSSSNGFSEMTTPTSVKSNPAPVLSVTNGSKTDLNTEVLNVFREPANVESEHGVHIDEIVKRFRLPEAKIKVAIDYLADIGHIYSTIDESHYKSAFNE</sequence>
<accession>Q6K9U2</accession>
<accession>A0A0P0VRK3</accession>
<accession>B9F4N4</accession>
<accession>Q9AVM2</accession>
<accession>Q9FY12</accession>
<name>RFA2A_ORYSJ</name>
<protein>
    <recommendedName>
        <fullName>Replication protein A 32 kDa subunit A</fullName>
        <shortName>OsRPA32A</shortName>
    </recommendedName>
    <alternativeName>
        <fullName>OsRPA32-1</fullName>
    </alternativeName>
    <alternativeName>
        <fullName>Replication factor A protein 2A</fullName>
    </alternativeName>
    <alternativeName>
        <fullName>Replication protein A 2A</fullName>
    </alternativeName>
</protein>
<comment type="function">
    <text evidence="1">Component of the replication protein A complex (RPA) required for DNA recombination, repair and replication. The activity of RPA is mediated by single-stranded DNA binding and protein interactions (By similarity).</text>
</comment>
<comment type="subunit">
    <text evidence="1 4 5">Heterotrimer of RPA1, RPA2 and RPA3 (canonical replication protein A complex) (By similarity). Interacts with RPA1A, RPA1B and RPA3.</text>
</comment>
<comment type="interaction">
    <interactant intactId="EBI-849513">
        <id>Q6K9U2</id>
    </interactant>
    <interactant intactId="EBI-849521">
        <id>Q9SDK9</id>
        <label>RPA3</label>
    </interactant>
    <organismsDiffer>false</organismsDiffer>
    <experiments>5</experiments>
</comment>
<comment type="subcellular location">
    <subcellularLocation>
        <location evidence="3">Nucleus</location>
    </subcellularLocation>
</comment>
<comment type="tissue specificity">
    <text evidence="3">Expressed in root tips, roots, shoot apical meristem (SAM), young leaves, flag leaves and ears, and at lower levels in mature leaves.</text>
</comment>
<comment type="induction">
    <text evidence="3 6">Repressed by sucrose starvation (PubMed:11470540). Induced by gamma irradiation (PubMed:25124817).</text>
</comment>
<comment type="PTM">
    <text evidence="1">Phosphorylated in a cell-cycle-dependent manner (from the S phase until mitosis). In response to DNA damage, recruited to DNA-repair nuclear foci, as a hypophosphorylated form (By similarity).</text>
</comment>
<comment type="similarity">
    <text evidence="7">Belongs to the replication factor A protein 2 family.</text>
</comment>
<comment type="sequence caution" evidence="7">
    <conflict type="erroneous initiation">
        <sequence resource="EMBL-CDS" id="EEE58102"/>
    </conflict>
    <text>Truncated N-terminus.</text>
</comment>
<reference key="1">
    <citation type="journal article" date="2001" name="Gene">
        <title>Two types of replication protein A 70 kDa subunit in rice, Oryza sativa: molecular cloning, characterization, and cellular &amp; tissue distribution.</title>
        <authorList>
            <person name="Ishibashi T."/>
            <person name="Kimura S."/>
            <person name="Furukawa T."/>
            <person name="Hatanaka M."/>
            <person name="Hashimoto J."/>
            <person name="Sakaguchi K."/>
        </authorList>
    </citation>
    <scope>NUCLEOTIDE SEQUENCE [MRNA]</scope>
    <scope>SUBCELLULAR LOCATION</scope>
    <scope>TISSUE SPECIFICITY</scope>
    <scope>INDUCTION</scope>
    <source>
        <strain>cv. Nipponbare</strain>
    </source>
</reference>
<reference key="2">
    <citation type="submission" date="2000-08" db="EMBL/GenBank/DDBJ databases">
        <title>Transcript levels of replication proteins A1 (RPA1) and A2 (RPA2) are upregulated in an S phase-specific manner in rice.</title>
        <authorList>
            <person name="Lorbiecke R."/>
            <person name="Fabian T."/>
            <person name="Huss S."/>
            <person name="Sauter M."/>
        </authorList>
    </citation>
    <scope>NUCLEOTIDE SEQUENCE [MRNA]</scope>
</reference>
<reference key="3">
    <citation type="journal article" date="2005" name="Nature">
        <title>The map-based sequence of the rice genome.</title>
        <authorList>
            <consortium name="International rice genome sequencing project (IRGSP)"/>
        </authorList>
    </citation>
    <scope>NUCLEOTIDE SEQUENCE [LARGE SCALE GENOMIC DNA]</scope>
    <source>
        <strain>cv. Nipponbare</strain>
    </source>
</reference>
<reference key="4">
    <citation type="journal article" date="2008" name="Nucleic Acids Res.">
        <title>The rice annotation project database (RAP-DB): 2008 update.</title>
        <authorList>
            <consortium name="The rice annotation project (RAP)"/>
        </authorList>
    </citation>
    <scope>GENOME REANNOTATION</scope>
    <source>
        <strain>cv. Nipponbare</strain>
    </source>
</reference>
<reference key="5">
    <citation type="journal article" date="2013" name="Rice">
        <title>Improvement of the Oryza sativa Nipponbare reference genome using next generation sequence and optical map data.</title>
        <authorList>
            <person name="Kawahara Y."/>
            <person name="de la Bastide M."/>
            <person name="Hamilton J.P."/>
            <person name="Kanamori H."/>
            <person name="McCombie W.R."/>
            <person name="Ouyang S."/>
            <person name="Schwartz D.C."/>
            <person name="Tanaka T."/>
            <person name="Wu J."/>
            <person name="Zhou S."/>
            <person name="Childs K.L."/>
            <person name="Davidson R.M."/>
            <person name="Lin H."/>
            <person name="Quesada-Ocampo L."/>
            <person name="Vaillancourt B."/>
            <person name="Sakai H."/>
            <person name="Lee S.S."/>
            <person name="Kim J."/>
            <person name="Numa H."/>
            <person name="Itoh T."/>
            <person name="Buell C.R."/>
            <person name="Matsumoto T."/>
        </authorList>
    </citation>
    <scope>GENOME REANNOTATION</scope>
    <source>
        <strain>cv. Nipponbare</strain>
    </source>
</reference>
<reference key="6">
    <citation type="journal article" date="2005" name="PLoS Biol.">
        <title>The genomes of Oryza sativa: a history of duplications.</title>
        <authorList>
            <person name="Yu J."/>
            <person name="Wang J."/>
            <person name="Lin W."/>
            <person name="Li S."/>
            <person name="Li H."/>
            <person name="Zhou J."/>
            <person name="Ni P."/>
            <person name="Dong W."/>
            <person name="Hu S."/>
            <person name="Zeng C."/>
            <person name="Zhang J."/>
            <person name="Zhang Y."/>
            <person name="Li R."/>
            <person name="Xu Z."/>
            <person name="Li S."/>
            <person name="Li X."/>
            <person name="Zheng H."/>
            <person name="Cong L."/>
            <person name="Lin L."/>
            <person name="Yin J."/>
            <person name="Geng J."/>
            <person name="Li G."/>
            <person name="Shi J."/>
            <person name="Liu J."/>
            <person name="Lv H."/>
            <person name="Li J."/>
            <person name="Wang J."/>
            <person name="Deng Y."/>
            <person name="Ran L."/>
            <person name="Shi X."/>
            <person name="Wang X."/>
            <person name="Wu Q."/>
            <person name="Li C."/>
            <person name="Ren X."/>
            <person name="Wang J."/>
            <person name="Wang X."/>
            <person name="Li D."/>
            <person name="Liu D."/>
            <person name="Zhang X."/>
            <person name="Ji Z."/>
            <person name="Zhao W."/>
            <person name="Sun Y."/>
            <person name="Zhang Z."/>
            <person name="Bao J."/>
            <person name="Han Y."/>
            <person name="Dong L."/>
            <person name="Ji J."/>
            <person name="Chen P."/>
            <person name="Wu S."/>
            <person name="Liu J."/>
            <person name="Xiao Y."/>
            <person name="Bu D."/>
            <person name="Tan J."/>
            <person name="Yang L."/>
            <person name="Ye C."/>
            <person name="Zhang J."/>
            <person name="Xu J."/>
            <person name="Zhou Y."/>
            <person name="Yu Y."/>
            <person name="Zhang B."/>
            <person name="Zhuang S."/>
            <person name="Wei H."/>
            <person name="Liu B."/>
            <person name="Lei M."/>
            <person name="Yu H."/>
            <person name="Li Y."/>
            <person name="Xu H."/>
            <person name="Wei S."/>
            <person name="He X."/>
            <person name="Fang L."/>
            <person name="Zhang Z."/>
            <person name="Zhang Y."/>
            <person name="Huang X."/>
            <person name="Su Z."/>
            <person name="Tong W."/>
            <person name="Li J."/>
            <person name="Tong Z."/>
            <person name="Li S."/>
            <person name="Ye J."/>
            <person name="Wang L."/>
            <person name="Fang L."/>
            <person name="Lei T."/>
            <person name="Chen C.-S."/>
            <person name="Chen H.-C."/>
            <person name="Xu Z."/>
            <person name="Li H."/>
            <person name="Huang H."/>
            <person name="Zhang F."/>
            <person name="Xu H."/>
            <person name="Li N."/>
            <person name="Zhao C."/>
            <person name="Li S."/>
            <person name="Dong L."/>
            <person name="Huang Y."/>
            <person name="Li L."/>
            <person name="Xi Y."/>
            <person name="Qi Q."/>
            <person name="Li W."/>
            <person name="Zhang B."/>
            <person name="Hu W."/>
            <person name="Zhang Y."/>
            <person name="Tian X."/>
            <person name="Jiao Y."/>
            <person name="Liang X."/>
            <person name="Jin J."/>
            <person name="Gao L."/>
            <person name="Zheng W."/>
            <person name="Hao B."/>
            <person name="Liu S.-M."/>
            <person name="Wang W."/>
            <person name="Yuan L."/>
            <person name="Cao M."/>
            <person name="McDermott J."/>
            <person name="Samudrala R."/>
            <person name="Wang J."/>
            <person name="Wong G.K.-S."/>
            <person name="Yang H."/>
        </authorList>
    </citation>
    <scope>NUCLEOTIDE SEQUENCE [LARGE SCALE GENOMIC DNA]</scope>
    <source>
        <strain>cv. Nipponbare</strain>
    </source>
</reference>
<reference key="7">
    <citation type="journal article" date="2003" name="Science">
        <title>Collection, mapping, and annotation of over 28,000 cDNA clones from japonica rice.</title>
        <authorList>
            <consortium name="The rice full-length cDNA consortium"/>
        </authorList>
    </citation>
    <scope>NUCLEOTIDE SEQUENCE [LARGE SCALE MRNA]</scope>
    <source>
        <strain>cv. Nipponbare</strain>
    </source>
</reference>
<reference key="8">
    <citation type="journal article" date="2005" name="FEBS J.">
        <title>Two types of replication protein A in seed plants.</title>
        <authorList>
            <person name="Ishibashi T."/>
            <person name="Koga A."/>
            <person name="Yamamoto T."/>
            <person name="Uchiyama Y."/>
            <person name="Mori Y."/>
            <person name="Hashimoto J."/>
            <person name="Kimura S."/>
            <person name="Sakaguchi K."/>
        </authorList>
    </citation>
    <scope>INTERACTION WITH RPA1A; RPA1B AND RPA3</scope>
</reference>
<reference key="9">
    <citation type="journal article" date="2006" name="J. Biochem.">
        <title>A higher plant has three different types of RPA heterotrimeric complex.</title>
        <authorList>
            <person name="Ishibashi T."/>
            <person name="Kimura S."/>
            <person name="Sakaguchi K."/>
        </authorList>
    </citation>
    <scope>INTERACTION WITH RPA1B AND RPA3</scope>
</reference>
<reference key="10">
    <citation type="journal article" date="2014" name="J. Hered.">
        <title>Unraveling low-level gamma radiation--responsive changes in expression of early and late genes in leaves of rice seedlings at Iitate Village, Fukushima.</title>
        <authorList>
            <person name="Hayashi G."/>
            <person name="Shibato J."/>
            <person name="Imanaka T."/>
            <person name="Cho K."/>
            <person name="Kubo A."/>
            <person name="Kikuchi S."/>
            <person name="Satoh K."/>
            <person name="Kimura S."/>
            <person name="Ozawa S."/>
            <person name="Fukutani S."/>
            <person name="Endo S."/>
            <person name="Ichikawa K."/>
            <person name="Agrawal G.K."/>
            <person name="Shioda S."/>
            <person name="Fukumoto M."/>
            <person name="Rakwal R."/>
        </authorList>
    </citation>
    <scope>INDUCTION BY GAMMA IRRADIATION</scope>
</reference>
<dbReference type="EMBL" id="AB037145">
    <property type="protein sequence ID" value="BAB40535.1"/>
    <property type="molecule type" value="mRNA"/>
</dbReference>
<dbReference type="EMBL" id="AJ278822">
    <property type="protein sequence ID" value="CAC03572.1"/>
    <property type="molecule type" value="mRNA"/>
</dbReference>
<dbReference type="EMBL" id="AP004043">
    <property type="protein sequence ID" value="BAD22936.1"/>
    <property type="molecule type" value="Genomic_DNA"/>
</dbReference>
<dbReference type="EMBL" id="AP008208">
    <property type="protein sequence ID" value="BAF10518.1"/>
    <property type="molecule type" value="Genomic_DNA"/>
</dbReference>
<dbReference type="EMBL" id="AP014958">
    <property type="protein sequence ID" value="BAS81724.1"/>
    <property type="molecule type" value="Genomic_DNA"/>
</dbReference>
<dbReference type="EMBL" id="CM000139">
    <property type="protein sequence ID" value="EEE58102.1"/>
    <property type="status" value="ALT_INIT"/>
    <property type="molecule type" value="Genomic_DNA"/>
</dbReference>
<dbReference type="EMBL" id="AK103235">
    <property type="protein sequence ID" value="BAG95966.1"/>
    <property type="molecule type" value="mRNA"/>
</dbReference>
<dbReference type="RefSeq" id="XP_015624204.1">
    <property type="nucleotide sequence ID" value="XM_015768718.1"/>
</dbReference>
<dbReference type="SMR" id="Q6K9U2"/>
<dbReference type="FunCoup" id="Q6K9U2">
    <property type="interactions" value="2876"/>
</dbReference>
<dbReference type="IntAct" id="Q6K9U2">
    <property type="interactions" value="1"/>
</dbReference>
<dbReference type="STRING" id="39947.Q6K9U2"/>
<dbReference type="PaxDb" id="39947-Q6K9U2"/>
<dbReference type="EnsemblPlants" id="Os02t0829100-01">
    <property type="protein sequence ID" value="Os02t0829100-01"/>
    <property type="gene ID" value="Os02g0829100"/>
</dbReference>
<dbReference type="Gramene" id="Os02t0829100-01">
    <property type="protein sequence ID" value="Os02t0829100-01"/>
    <property type="gene ID" value="Os02g0829100"/>
</dbReference>
<dbReference type="KEGG" id="dosa:Os02g0829100"/>
<dbReference type="eggNOG" id="KOG3108">
    <property type="taxonomic scope" value="Eukaryota"/>
</dbReference>
<dbReference type="HOGENOM" id="CLU_051033_3_1_1"/>
<dbReference type="InParanoid" id="Q6K9U2"/>
<dbReference type="OMA" id="DEHHFKA"/>
<dbReference type="OrthoDB" id="25571at2759"/>
<dbReference type="PlantReactome" id="R-OSA-9645850">
    <property type="pathway name" value="Activation of pre-replication complex"/>
</dbReference>
<dbReference type="Proteomes" id="UP000000763">
    <property type="component" value="Chromosome 2"/>
</dbReference>
<dbReference type="Proteomes" id="UP000007752">
    <property type="component" value="Chromosome 2"/>
</dbReference>
<dbReference type="Proteomes" id="UP000059680">
    <property type="component" value="Chromosome 2"/>
</dbReference>
<dbReference type="GO" id="GO:0000781">
    <property type="term" value="C:chromosome, telomeric region"/>
    <property type="evidence" value="ECO:0000318"/>
    <property type="project" value="GO_Central"/>
</dbReference>
<dbReference type="GO" id="GO:0005662">
    <property type="term" value="C:DNA replication factor A complex"/>
    <property type="evidence" value="ECO:0000318"/>
    <property type="project" value="GO_Central"/>
</dbReference>
<dbReference type="GO" id="GO:0005634">
    <property type="term" value="C:nucleus"/>
    <property type="evidence" value="ECO:0000314"/>
    <property type="project" value="UniProtKB"/>
</dbReference>
<dbReference type="GO" id="GO:0035861">
    <property type="term" value="C:site of double-strand break"/>
    <property type="evidence" value="ECO:0000318"/>
    <property type="project" value="GO_Central"/>
</dbReference>
<dbReference type="GO" id="GO:0003697">
    <property type="term" value="F:single-stranded DNA binding"/>
    <property type="evidence" value="ECO:0000318"/>
    <property type="project" value="GO_Central"/>
</dbReference>
<dbReference type="GO" id="GO:0042162">
    <property type="term" value="F:telomeric DNA binding"/>
    <property type="evidence" value="ECO:0000318"/>
    <property type="project" value="GO_Central"/>
</dbReference>
<dbReference type="GO" id="GO:0006260">
    <property type="term" value="P:DNA replication"/>
    <property type="evidence" value="ECO:0000318"/>
    <property type="project" value="GO_Central"/>
</dbReference>
<dbReference type="GO" id="GO:0000724">
    <property type="term" value="P:double-strand break repair via homologous recombination"/>
    <property type="evidence" value="ECO:0000318"/>
    <property type="project" value="GO_Central"/>
</dbReference>
<dbReference type="GO" id="GO:0006289">
    <property type="term" value="P:nucleotide-excision repair"/>
    <property type="evidence" value="ECO:0000318"/>
    <property type="project" value="GO_Central"/>
</dbReference>
<dbReference type="CDD" id="cd04478">
    <property type="entry name" value="RPA2_DBD_D"/>
    <property type="match status" value="1"/>
</dbReference>
<dbReference type="FunFam" id="1.10.10.10:FF:000168">
    <property type="entry name" value="Replication protein A 32 kDa subunit"/>
    <property type="match status" value="1"/>
</dbReference>
<dbReference type="FunFam" id="2.40.50.140:FF:000184">
    <property type="entry name" value="replication protein A 32 kDa subunit A-like"/>
    <property type="match status" value="1"/>
</dbReference>
<dbReference type="Gene3D" id="2.40.50.140">
    <property type="entry name" value="Nucleic acid-binding proteins"/>
    <property type="match status" value="1"/>
</dbReference>
<dbReference type="Gene3D" id="1.10.10.10">
    <property type="entry name" value="Winged helix-like DNA-binding domain superfamily/Winged helix DNA-binding domain"/>
    <property type="match status" value="1"/>
</dbReference>
<dbReference type="InterPro" id="IPR012340">
    <property type="entry name" value="NA-bd_OB-fold"/>
</dbReference>
<dbReference type="InterPro" id="IPR040260">
    <property type="entry name" value="RFA2-like"/>
</dbReference>
<dbReference type="InterPro" id="IPR014646">
    <property type="entry name" value="Rfa2/RPA32"/>
</dbReference>
<dbReference type="InterPro" id="IPR014892">
    <property type="entry name" value="RPA_C"/>
</dbReference>
<dbReference type="InterPro" id="IPR036388">
    <property type="entry name" value="WH-like_DNA-bd_sf"/>
</dbReference>
<dbReference type="InterPro" id="IPR036390">
    <property type="entry name" value="WH_DNA-bd_sf"/>
</dbReference>
<dbReference type="PANTHER" id="PTHR13989">
    <property type="entry name" value="REPLICATION PROTEIN A-RELATED"/>
    <property type="match status" value="1"/>
</dbReference>
<dbReference type="PANTHER" id="PTHR13989:SF16">
    <property type="entry name" value="REPLICATION PROTEIN A2"/>
    <property type="match status" value="1"/>
</dbReference>
<dbReference type="Pfam" id="PF08784">
    <property type="entry name" value="RPA_C"/>
    <property type="match status" value="1"/>
</dbReference>
<dbReference type="PIRSF" id="PIRSF036949">
    <property type="entry name" value="RPA32"/>
    <property type="match status" value="1"/>
</dbReference>
<dbReference type="SUPFAM" id="SSF50249">
    <property type="entry name" value="Nucleic acid-binding proteins"/>
    <property type="match status" value="1"/>
</dbReference>
<dbReference type="SUPFAM" id="SSF46785">
    <property type="entry name" value="Winged helix' DNA-binding domain"/>
    <property type="match status" value="1"/>
</dbReference>